<protein>
    <recommendedName>
        <fullName evidence="17">DnaJ homolog subfamily C member 5</fullName>
    </recommendedName>
    <alternativeName>
        <fullName evidence="17">Ceroid-lipofuscinosis neuronal protein 4</fullName>
    </alternativeName>
    <alternativeName>
        <fullName evidence="16">Cysteine string protein</fullName>
        <shortName evidence="16">CSP</shortName>
    </alternativeName>
</protein>
<keyword id="KW-0002">3D-structure</keyword>
<keyword id="KW-0007">Acetylation</keyword>
<keyword id="KW-0025">Alternative splicing</keyword>
<keyword id="KW-1003">Cell membrane</keyword>
<keyword id="KW-0143">Chaperone</keyword>
<keyword id="KW-0963">Cytoplasm</keyword>
<keyword id="KW-0968">Cytoplasmic vesicle</keyword>
<keyword id="KW-0225">Disease variant</keyword>
<keyword id="KW-0449">Lipoprotein</keyword>
<keyword id="KW-0472">Membrane</keyword>
<keyword id="KW-0523">Neurodegeneration</keyword>
<keyword id="KW-0525">Neuronal ceroid lipofuscinosis</keyword>
<keyword id="KW-0564">Palmitate</keyword>
<keyword id="KW-0597">Phosphoprotein</keyword>
<keyword id="KW-1267">Proteomics identification</keyword>
<keyword id="KW-1185">Reference proteome</keyword>
<accession>Q9H3Z4</accession>
<accession>A8K0M0</accession>
<accession>B3KY68</accession>
<accession>E1P5G8</accession>
<accession>Q9H3Z5</accession>
<accession>Q9H7H2</accession>
<proteinExistence type="evidence at protein level"/>
<comment type="function">
    <text evidence="1 2">Acts as a general chaperone in regulated exocytosis (By similarity). Acts as a co-chaperone for the SNARE protein SNAP-25 (By similarity). Involved in the calcium-mediated control of a late stage of exocytosis (By similarity). May have an important role in presynaptic function. May be involved in calcium-dependent neurotransmitter release at nerve endings (By similarity).</text>
</comment>
<comment type="subunit">
    <text evidence="1 12 13">Oligomers (PubMed:27452402). Homodimer (By similarity). Interacts with the chaperone complex consisting of HSC70 and SGTA (By similarity). Interacts with ZDHHC13 (via ANK repeats) (By similarity). Interacts with ZDHHC17 (via ANK repeats) (PubMed:28882895). Interacts with SYT1, SYT5 and SYT7, and with SYT9, forming a complex with SNAP25 (By similarity).</text>
</comment>
<comment type="interaction">
    <interactant intactId="EBI-4324577">
        <id>Q9H3Z4</id>
    </interactant>
    <interactant intactId="EBI-524753">
        <id>Q8IUH5</id>
        <label>ZDHHC17</label>
    </interactant>
    <organismsDiffer>false</organismsDiffer>
    <experiments>6</experiments>
</comment>
<comment type="subcellular location">
    <subcellularLocation>
        <location evidence="2">Cytoplasm</location>
        <location evidence="2">Cytosol</location>
    </subcellularLocation>
    <subcellularLocation>
        <location evidence="2">Membrane</location>
        <topology evidence="2">Lipid-anchor</topology>
    </subcellularLocation>
    <subcellularLocation>
        <location evidence="2">Cytoplasmic vesicle</location>
        <location evidence="2">Secretory vesicle</location>
        <location evidence="2">Chromaffin granule membrane</location>
    </subcellularLocation>
    <subcellularLocation>
        <location evidence="6">Melanosome</location>
    </subcellularLocation>
    <subcellularLocation>
        <location evidence="7">Cell membrane</location>
    </subcellularLocation>
    <text evidence="2 6">The association with membranes is regulated by palmitoylation (By similarity). Identified by mass spectrometry in melanosome fractions from stage I to stage IV (PubMed:17081065).</text>
</comment>
<comment type="alternative products">
    <event type="alternative splicing"/>
    <isoform>
        <id>Q9H3Z4-1</id>
        <name>1</name>
        <sequence type="displayed"/>
    </isoform>
    <isoform>
        <id>Q9H3Z4-2</id>
        <name>2</name>
        <sequence type="described" ref="VSP_001292"/>
    </isoform>
</comment>
<comment type="tissue specificity">
    <text evidence="14">Expressed in pancreas, kidney, skeletal muscle, liver, lung, placenta, brain and heart.</text>
</comment>
<comment type="PTM">
    <text evidence="12">Ser-10 phosphorylation induces an order-to-disorder transition triggering the interaction with Lys-58 (PubMed:27452402). This conformational switch modulates DNAJC5's cellular functions by reducing binding to syntaxin and synaptogamin without altering HSC70 interactions (PubMed:27452402).</text>
</comment>
<comment type="PTM">
    <text evidence="2">Palmitoylated. Could be palmitoylated by DHHC3, DHHC7, DHHC15 and DHHC17. Palmitoylation occurs probably in the cysteine-rich domain and regulates DNAJC5 membrane attachment.</text>
</comment>
<comment type="disease" evidence="7 8 9 10 11">
    <disease id="DI-03226">
        <name>Ceroid lipofuscinosis, neuronal, 4B (Kufs type), autosomal dominant</name>
        <acronym>CLN4B</acronym>
        <description>An adult-onset neuronal ceroid lipofuscinosis. Neuronal ceroid lipofuscinoses are progressive neurodegenerative, lysosomal storage diseases characterized by intracellular accumulation of autofluorescent liposomal material, and clinically by seizures, dementia, visual loss, and/or cerebral atrophy. CLN4B has no visual involvement and is characterized by seizures and other neurologic symptoms.</description>
        <dbReference type="MIM" id="162350"/>
    </disease>
    <text>The disease is caused by variants affecting the gene represented in this entry.</text>
</comment>
<comment type="miscellaneous">
    <text evidence="18">Upon phosphorylation, Ser-10 interacts with Lys-58, a highly conserved residue in DnaJ proteins that is also a ubiquitination site in DNAJC5.</text>
</comment>
<organism>
    <name type="scientific">Homo sapiens</name>
    <name type="common">Human</name>
    <dbReference type="NCBI Taxonomy" id="9606"/>
    <lineage>
        <taxon>Eukaryota</taxon>
        <taxon>Metazoa</taxon>
        <taxon>Chordata</taxon>
        <taxon>Craniata</taxon>
        <taxon>Vertebrata</taxon>
        <taxon>Euteleostomi</taxon>
        <taxon>Mammalia</taxon>
        <taxon>Eutheria</taxon>
        <taxon>Euarchontoglires</taxon>
        <taxon>Primates</taxon>
        <taxon>Haplorrhini</taxon>
        <taxon>Catarrhini</taxon>
        <taxon>Hominidae</taxon>
        <taxon>Homo</taxon>
    </lineage>
</organism>
<gene>
    <name evidence="19" type="primary">DNAJC5</name>
    <name evidence="19" type="synonym">CLN4</name>
</gene>
<evidence type="ECO:0000250" key="1">
    <source>
        <dbReference type="UniProtKB" id="P60904"/>
    </source>
</evidence>
<evidence type="ECO:0000250" key="2">
    <source>
        <dbReference type="UniProtKB" id="Q29455"/>
    </source>
</evidence>
<evidence type="ECO:0000255" key="3">
    <source>
        <dbReference type="PROSITE-ProRule" id="PRU00286"/>
    </source>
</evidence>
<evidence type="ECO:0000269" key="4">
    <source>
    </source>
</evidence>
<evidence type="ECO:0000269" key="5">
    <source>
    </source>
</evidence>
<evidence type="ECO:0000269" key="6">
    <source>
    </source>
</evidence>
<evidence type="ECO:0000269" key="7">
    <source>
    </source>
</evidence>
<evidence type="ECO:0000269" key="8">
    <source>
    </source>
</evidence>
<evidence type="ECO:0000269" key="9">
    <source>
    </source>
</evidence>
<evidence type="ECO:0000269" key="10">
    <source>
    </source>
</evidence>
<evidence type="ECO:0000269" key="11">
    <source>
    </source>
</evidence>
<evidence type="ECO:0000269" key="12">
    <source>
    </source>
</evidence>
<evidence type="ECO:0000269" key="13">
    <source>
    </source>
</evidence>
<evidence type="ECO:0000269" key="14">
    <source>
    </source>
</evidence>
<evidence type="ECO:0000303" key="15">
    <source>
    </source>
</evidence>
<evidence type="ECO:0000303" key="16">
    <source>
    </source>
</evidence>
<evidence type="ECO:0000305" key="17"/>
<evidence type="ECO:0000305" key="18">
    <source>
    </source>
</evidence>
<evidence type="ECO:0000312" key="19">
    <source>
        <dbReference type="HGNC" id="HGNC:16235"/>
    </source>
</evidence>
<evidence type="ECO:0007744" key="20">
    <source>
    </source>
</evidence>
<evidence type="ECO:0007744" key="21">
    <source>
    </source>
</evidence>
<evidence type="ECO:0007744" key="22">
    <source>
    </source>
</evidence>
<evidence type="ECO:0007744" key="23">
    <source>
    </source>
</evidence>
<evidence type="ECO:0007744" key="24">
    <source>
    </source>
</evidence>
<evidence type="ECO:0007829" key="25">
    <source>
        <dbReference type="PDB" id="2N04"/>
    </source>
</evidence>
<evidence type="ECO:0007829" key="26">
    <source>
        <dbReference type="PDB" id="2N05"/>
    </source>
</evidence>
<sequence>MADQRQRSLSTSGESLYHVLGLDKNATSDDIKKSYRKLALKYHPDKNPDNPEAADKFKEINNAHAILTDATKRNIYDKYGSLGLYVAEQFGEENVNTYFVLSSWWAKALFVFCGLLTCCYCCCCLCCCFNCCCGKCKPKAPEGEETEFYVSPEDLEAQLQSDEREATDTPIVIQPASATETTQLTADSHPSYHTDGFN</sequence>
<reference key="1">
    <citation type="journal article" date="1996" name="FEBS Lett.">
        <title>Widespread expression of human cysteine string proteins.</title>
        <authorList>
            <person name="Coppola T."/>
            <person name="Gundersen C."/>
        </authorList>
    </citation>
    <scope>NUCLEOTIDE SEQUENCE [MRNA] (ISOFORMS 1 AND 2)</scope>
    <scope>TISSUE SPECIFICITY</scope>
</reference>
<reference key="2">
    <citation type="journal article" date="2004" name="Nat. Genet.">
        <title>Complete sequencing and characterization of 21,243 full-length human cDNAs.</title>
        <authorList>
            <person name="Ota T."/>
            <person name="Suzuki Y."/>
            <person name="Nishikawa T."/>
            <person name="Otsuki T."/>
            <person name="Sugiyama T."/>
            <person name="Irie R."/>
            <person name="Wakamatsu A."/>
            <person name="Hayashi K."/>
            <person name="Sato H."/>
            <person name="Nagai K."/>
            <person name="Kimura K."/>
            <person name="Makita H."/>
            <person name="Sekine M."/>
            <person name="Obayashi M."/>
            <person name="Nishi T."/>
            <person name="Shibahara T."/>
            <person name="Tanaka T."/>
            <person name="Ishii S."/>
            <person name="Yamamoto J."/>
            <person name="Saito K."/>
            <person name="Kawai Y."/>
            <person name="Isono Y."/>
            <person name="Nakamura Y."/>
            <person name="Nagahari K."/>
            <person name="Murakami K."/>
            <person name="Yasuda T."/>
            <person name="Iwayanagi T."/>
            <person name="Wagatsuma M."/>
            <person name="Shiratori A."/>
            <person name="Sudo H."/>
            <person name="Hosoiri T."/>
            <person name="Kaku Y."/>
            <person name="Kodaira H."/>
            <person name="Kondo H."/>
            <person name="Sugawara M."/>
            <person name="Takahashi M."/>
            <person name="Kanda K."/>
            <person name="Yokoi T."/>
            <person name="Furuya T."/>
            <person name="Kikkawa E."/>
            <person name="Omura Y."/>
            <person name="Abe K."/>
            <person name="Kamihara K."/>
            <person name="Katsuta N."/>
            <person name="Sato K."/>
            <person name="Tanikawa M."/>
            <person name="Yamazaki M."/>
            <person name="Ninomiya K."/>
            <person name="Ishibashi T."/>
            <person name="Yamashita H."/>
            <person name="Murakawa K."/>
            <person name="Fujimori K."/>
            <person name="Tanai H."/>
            <person name="Kimata M."/>
            <person name="Watanabe M."/>
            <person name="Hiraoka S."/>
            <person name="Chiba Y."/>
            <person name="Ishida S."/>
            <person name="Ono Y."/>
            <person name="Takiguchi S."/>
            <person name="Watanabe S."/>
            <person name="Yosida M."/>
            <person name="Hotuta T."/>
            <person name="Kusano J."/>
            <person name="Kanehori K."/>
            <person name="Takahashi-Fujii A."/>
            <person name="Hara H."/>
            <person name="Tanase T.-O."/>
            <person name="Nomura Y."/>
            <person name="Togiya S."/>
            <person name="Komai F."/>
            <person name="Hara R."/>
            <person name="Takeuchi K."/>
            <person name="Arita M."/>
            <person name="Imose N."/>
            <person name="Musashino K."/>
            <person name="Yuuki H."/>
            <person name="Oshima A."/>
            <person name="Sasaki N."/>
            <person name="Aotsuka S."/>
            <person name="Yoshikawa Y."/>
            <person name="Matsunawa H."/>
            <person name="Ichihara T."/>
            <person name="Shiohata N."/>
            <person name="Sano S."/>
            <person name="Moriya S."/>
            <person name="Momiyama H."/>
            <person name="Satoh N."/>
            <person name="Takami S."/>
            <person name="Terashima Y."/>
            <person name="Suzuki O."/>
            <person name="Nakagawa S."/>
            <person name="Senoh A."/>
            <person name="Mizoguchi H."/>
            <person name="Goto Y."/>
            <person name="Shimizu F."/>
            <person name="Wakebe H."/>
            <person name="Hishigaki H."/>
            <person name="Watanabe T."/>
            <person name="Sugiyama A."/>
            <person name="Takemoto M."/>
            <person name="Kawakami B."/>
            <person name="Yamazaki M."/>
            <person name="Watanabe K."/>
            <person name="Kumagai A."/>
            <person name="Itakura S."/>
            <person name="Fukuzumi Y."/>
            <person name="Fujimori Y."/>
            <person name="Komiyama M."/>
            <person name="Tashiro H."/>
            <person name="Tanigami A."/>
            <person name="Fujiwara T."/>
            <person name="Ono T."/>
            <person name="Yamada K."/>
            <person name="Fujii Y."/>
            <person name="Ozaki K."/>
            <person name="Hirao M."/>
            <person name="Ohmori Y."/>
            <person name="Kawabata A."/>
            <person name="Hikiji T."/>
            <person name="Kobatake N."/>
            <person name="Inagaki H."/>
            <person name="Ikema Y."/>
            <person name="Okamoto S."/>
            <person name="Okitani R."/>
            <person name="Kawakami T."/>
            <person name="Noguchi S."/>
            <person name="Itoh T."/>
            <person name="Shigeta K."/>
            <person name="Senba T."/>
            <person name="Matsumura K."/>
            <person name="Nakajima Y."/>
            <person name="Mizuno T."/>
            <person name="Morinaga M."/>
            <person name="Sasaki M."/>
            <person name="Togashi T."/>
            <person name="Oyama M."/>
            <person name="Hata H."/>
            <person name="Watanabe M."/>
            <person name="Komatsu T."/>
            <person name="Mizushima-Sugano J."/>
            <person name="Satoh T."/>
            <person name="Shirai Y."/>
            <person name="Takahashi Y."/>
            <person name="Nakagawa K."/>
            <person name="Okumura K."/>
            <person name="Nagase T."/>
            <person name="Nomura N."/>
            <person name="Kikuchi H."/>
            <person name="Masuho Y."/>
            <person name="Yamashita R."/>
            <person name="Nakai K."/>
            <person name="Yada T."/>
            <person name="Nakamura Y."/>
            <person name="Ohara O."/>
            <person name="Isogai T."/>
            <person name="Sugano S."/>
        </authorList>
    </citation>
    <scope>NUCLEOTIDE SEQUENCE [LARGE SCALE MRNA] (ISOFORMS 1 AND 2)</scope>
    <source>
        <tissue>Cerebellum</tissue>
        <tissue>Hippocampus</tissue>
    </source>
</reference>
<reference key="3">
    <citation type="journal article" date="2001" name="Nature">
        <title>The DNA sequence and comparative analysis of human chromosome 20.</title>
        <authorList>
            <person name="Deloukas P."/>
            <person name="Matthews L.H."/>
            <person name="Ashurst J.L."/>
            <person name="Burton J."/>
            <person name="Gilbert J.G.R."/>
            <person name="Jones M."/>
            <person name="Stavrides G."/>
            <person name="Almeida J.P."/>
            <person name="Babbage A.K."/>
            <person name="Bagguley C.L."/>
            <person name="Bailey J."/>
            <person name="Barlow K.F."/>
            <person name="Bates K.N."/>
            <person name="Beard L.M."/>
            <person name="Beare D.M."/>
            <person name="Beasley O.P."/>
            <person name="Bird C.P."/>
            <person name="Blakey S.E."/>
            <person name="Bridgeman A.M."/>
            <person name="Brown A.J."/>
            <person name="Buck D."/>
            <person name="Burrill W.D."/>
            <person name="Butler A.P."/>
            <person name="Carder C."/>
            <person name="Carter N.P."/>
            <person name="Chapman J.C."/>
            <person name="Clamp M."/>
            <person name="Clark G."/>
            <person name="Clark L.N."/>
            <person name="Clark S.Y."/>
            <person name="Clee C.M."/>
            <person name="Clegg S."/>
            <person name="Cobley V.E."/>
            <person name="Collier R.E."/>
            <person name="Connor R.E."/>
            <person name="Corby N.R."/>
            <person name="Coulson A."/>
            <person name="Coville G.J."/>
            <person name="Deadman R."/>
            <person name="Dhami P.D."/>
            <person name="Dunn M."/>
            <person name="Ellington A.G."/>
            <person name="Frankland J.A."/>
            <person name="Fraser A."/>
            <person name="French L."/>
            <person name="Garner P."/>
            <person name="Grafham D.V."/>
            <person name="Griffiths C."/>
            <person name="Griffiths M.N.D."/>
            <person name="Gwilliam R."/>
            <person name="Hall R.E."/>
            <person name="Hammond S."/>
            <person name="Harley J.L."/>
            <person name="Heath P.D."/>
            <person name="Ho S."/>
            <person name="Holden J.L."/>
            <person name="Howden P.J."/>
            <person name="Huckle E."/>
            <person name="Hunt A.R."/>
            <person name="Hunt S.E."/>
            <person name="Jekosch K."/>
            <person name="Johnson C.M."/>
            <person name="Johnson D."/>
            <person name="Kay M.P."/>
            <person name="Kimberley A.M."/>
            <person name="King A."/>
            <person name="Knights A."/>
            <person name="Laird G.K."/>
            <person name="Lawlor S."/>
            <person name="Lehvaeslaiho M.H."/>
            <person name="Leversha M.A."/>
            <person name="Lloyd C."/>
            <person name="Lloyd D.M."/>
            <person name="Lovell J.D."/>
            <person name="Marsh V.L."/>
            <person name="Martin S.L."/>
            <person name="McConnachie L.J."/>
            <person name="McLay K."/>
            <person name="McMurray A.A."/>
            <person name="Milne S.A."/>
            <person name="Mistry D."/>
            <person name="Moore M.J.F."/>
            <person name="Mullikin J.C."/>
            <person name="Nickerson T."/>
            <person name="Oliver K."/>
            <person name="Parker A."/>
            <person name="Patel R."/>
            <person name="Pearce T.A.V."/>
            <person name="Peck A.I."/>
            <person name="Phillimore B.J.C.T."/>
            <person name="Prathalingam S.R."/>
            <person name="Plumb R.W."/>
            <person name="Ramsay H."/>
            <person name="Rice C.M."/>
            <person name="Ross M.T."/>
            <person name="Scott C.E."/>
            <person name="Sehra H.K."/>
            <person name="Shownkeen R."/>
            <person name="Sims S."/>
            <person name="Skuce C.D."/>
            <person name="Smith M.L."/>
            <person name="Soderlund C."/>
            <person name="Steward C.A."/>
            <person name="Sulston J.E."/>
            <person name="Swann R.M."/>
            <person name="Sycamore N."/>
            <person name="Taylor R."/>
            <person name="Tee L."/>
            <person name="Thomas D.W."/>
            <person name="Thorpe A."/>
            <person name="Tracey A."/>
            <person name="Tromans A.C."/>
            <person name="Vaudin M."/>
            <person name="Wall M."/>
            <person name="Wallis J.M."/>
            <person name="Whitehead S.L."/>
            <person name="Whittaker P."/>
            <person name="Willey D.L."/>
            <person name="Williams L."/>
            <person name="Williams S.A."/>
            <person name="Wilming L."/>
            <person name="Wray P.W."/>
            <person name="Hubbard T."/>
            <person name="Durbin R.M."/>
            <person name="Bentley D.R."/>
            <person name="Beck S."/>
            <person name="Rogers J."/>
        </authorList>
    </citation>
    <scope>NUCLEOTIDE SEQUENCE [LARGE SCALE GENOMIC DNA]</scope>
</reference>
<reference key="4">
    <citation type="submission" date="2005-09" db="EMBL/GenBank/DDBJ databases">
        <authorList>
            <person name="Mural R.J."/>
            <person name="Istrail S."/>
            <person name="Sutton G.G."/>
            <person name="Florea L."/>
            <person name="Halpern A.L."/>
            <person name="Mobarry C.M."/>
            <person name="Lippert R."/>
            <person name="Walenz B."/>
            <person name="Shatkay H."/>
            <person name="Dew I."/>
            <person name="Miller J.R."/>
            <person name="Flanigan M.J."/>
            <person name="Edwards N.J."/>
            <person name="Bolanos R."/>
            <person name="Fasulo D."/>
            <person name="Halldorsson B.V."/>
            <person name="Hannenhalli S."/>
            <person name="Turner R."/>
            <person name="Yooseph S."/>
            <person name="Lu F."/>
            <person name="Nusskern D.R."/>
            <person name="Shue B.C."/>
            <person name="Zheng X.H."/>
            <person name="Zhong F."/>
            <person name="Delcher A.L."/>
            <person name="Huson D.H."/>
            <person name="Kravitz S.A."/>
            <person name="Mouchard L."/>
            <person name="Reinert K."/>
            <person name="Remington K.A."/>
            <person name="Clark A.G."/>
            <person name="Waterman M.S."/>
            <person name="Eichler E.E."/>
            <person name="Adams M.D."/>
            <person name="Hunkapiller M.W."/>
            <person name="Myers E.W."/>
            <person name="Venter J.C."/>
        </authorList>
    </citation>
    <scope>NUCLEOTIDE SEQUENCE [LARGE SCALE GENOMIC DNA]</scope>
</reference>
<reference key="5">
    <citation type="journal article" date="2004" name="Genome Res.">
        <title>The status, quality, and expansion of the NIH full-length cDNA project: the Mammalian Gene Collection (MGC).</title>
        <authorList>
            <consortium name="The MGC Project Team"/>
        </authorList>
    </citation>
    <scope>NUCLEOTIDE SEQUENCE [LARGE SCALE MRNA] (ISOFORM 1)</scope>
    <source>
        <tissue>Blood</tissue>
    </source>
</reference>
<reference key="6">
    <citation type="journal article" date="2000" name="DNA Res.">
        <title>Characterization of long cDNA clones from human adult spleen.</title>
        <authorList>
            <person name="Hattori A."/>
            <person name="Okumura K."/>
            <person name="Nagase T."/>
            <person name="Kikuno R."/>
            <person name="Hirosawa M."/>
            <person name="Ohara O."/>
        </authorList>
    </citation>
    <scope>NUCLEOTIDE SEQUENCE [LARGE SCALE MRNA] OF 76-198</scope>
    <source>
        <tissue>Spleen</tissue>
    </source>
</reference>
<reference key="7">
    <citation type="journal article" date="2001" name="J. Biol. Chem.">
        <title>Phosphorylation of cysteine string protein by protein kinase A. Implications for the modulation of exocytosis.</title>
        <authorList>
            <person name="Evans G.J."/>
            <person name="Wilkinson M.C."/>
            <person name="Graham M.E."/>
            <person name="Turner K.M."/>
            <person name="Chamberlain L.H."/>
            <person name="Burgoyne R.D."/>
            <person name="Morgan A."/>
        </authorList>
    </citation>
    <scope>MUTAGENESIS OF SER-10</scope>
</reference>
<reference key="8">
    <citation type="journal article" date="2004" name="Proteomics">
        <title>Identification and characterization of phosphorylated proteins in the human pituitary.</title>
        <authorList>
            <person name="Giorgianni F."/>
            <person name="Beranova-Giorgianni S."/>
            <person name="Desiderio D.M."/>
        </authorList>
    </citation>
    <scope>PHOSPHORYLATION AT SER-10</scope>
    <source>
        <tissue>Pituitary</tissue>
    </source>
</reference>
<reference key="9">
    <citation type="journal article" date="2006" name="Cell">
        <title>Global, in vivo, and site-specific phosphorylation dynamics in signaling networks.</title>
        <authorList>
            <person name="Olsen J.V."/>
            <person name="Blagoev B."/>
            <person name="Gnad F."/>
            <person name="Macek B."/>
            <person name="Kumar C."/>
            <person name="Mortensen P."/>
            <person name="Mann M."/>
        </authorList>
    </citation>
    <scope>IDENTIFICATION BY MASS SPECTROMETRY [LARGE SCALE ANALYSIS]</scope>
    <source>
        <tissue>Cervix carcinoma</tissue>
    </source>
</reference>
<reference key="10">
    <citation type="journal article" date="2006" name="J. Proteome Res.">
        <title>Proteomic and bioinformatic characterization of the biogenesis and function of melanosomes.</title>
        <authorList>
            <person name="Chi A."/>
            <person name="Valencia J.C."/>
            <person name="Hu Z.-Z."/>
            <person name="Watabe H."/>
            <person name="Yamaguchi H."/>
            <person name="Mangini N.J."/>
            <person name="Huang H."/>
            <person name="Canfield V.A."/>
            <person name="Cheng K.C."/>
            <person name="Yang F."/>
            <person name="Abe R."/>
            <person name="Yamagishi S."/>
            <person name="Shabanowitz J."/>
            <person name="Hearing V.J."/>
            <person name="Wu C."/>
            <person name="Appella E."/>
            <person name="Hunt D.F."/>
        </authorList>
    </citation>
    <scope>SUBCELLULAR LOCATION [LARGE SCALE ANALYSIS]</scope>
    <source>
        <tissue>Melanoma</tissue>
    </source>
</reference>
<reference key="11">
    <citation type="journal article" date="2007" name="J. Proteome Res.">
        <title>Improved titanium dioxide enrichment of phosphopeptides from HeLa cells and high confident phosphopeptide identification by cross-validation of MS/MS and MS/MS/MS spectra.</title>
        <authorList>
            <person name="Yu L.R."/>
            <person name="Zhu Z."/>
            <person name="Chan K.C."/>
            <person name="Issaq H.J."/>
            <person name="Dimitrov D.S."/>
            <person name="Veenstra T.D."/>
        </authorList>
    </citation>
    <scope>IDENTIFICATION BY MASS SPECTROMETRY [LARGE SCALE ANALYSIS]</scope>
    <source>
        <tissue>Cervix carcinoma</tissue>
    </source>
</reference>
<reference key="12">
    <citation type="journal article" date="2008" name="J. Proteome Res.">
        <title>Phosphoproteome of resting human platelets.</title>
        <authorList>
            <person name="Zahedi R.P."/>
            <person name="Lewandrowski U."/>
            <person name="Wiesner J."/>
            <person name="Wortelkamp S."/>
            <person name="Moebius J."/>
            <person name="Schuetz C."/>
            <person name="Walter U."/>
            <person name="Gambaryan S."/>
            <person name="Sickmann A."/>
        </authorList>
    </citation>
    <scope>IDENTIFICATION BY MASS SPECTROMETRY [LARGE SCALE ANALYSIS]</scope>
    <source>
        <tissue>Platelet</tissue>
    </source>
</reference>
<reference key="13">
    <citation type="journal article" date="2008" name="Proc. Natl. Acad. Sci. U.S.A.">
        <title>A quantitative atlas of mitotic phosphorylation.</title>
        <authorList>
            <person name="Dephoure N."/>
            <person name="Zhou C."/>
            <person name="Villen J."/>
            <person name="Beausoleil S.A."/>
            <person name="Bakalarski C.E."/>
            <person name="Elledge S.J."/>
            <person name="Gygi S.P."/>
        </authorList>
    </citation>
    <scope>PHOSPHORYLATION [LARGE SCALE ANALYSIS] AT SER-10 AND SER-15</scope>
    <scope>IDENTIFICATION BY MASS SPECTROMETRY [LARGE SCALE ANALYSIS]</scope>
    <source>
        <tissue>Cervix carcinoma</tissue>
    </source>
</reference>
<reference key="14">
    <citation type="journal article" date="2009" name="Mol. Cell. Proteomics">
        <title>Large-scale proteomics analysis of the human kinome.</title>
        <authorList>
            <person name="Oppermann F.S."/>
            <person name="Gnad F."/>
            <person name="Olsen J.V."/>
            <person name="Hornberger R."/>
            <person name="Greff Z."/>
            <person name="Keri G."/>
            <person name="Mann M."/>
            <person name="Daub H."/>
        </authorList>
    </citation>
    <scope>IDENTIFICATION BY MASS SPECTROMETRY [LARGE SCALE ANALYSIS]</scope>
</reference>
<reference key="15">
    <citation type="journal article" date="2009" name="Sci. Signal.">
        <title>Quantitative phosphoproteomic analysis of T cell receptor signaling reveals system-wide modulation of protein-protein interactions.</title>
        <authorList>
            <person name="Mayya V."/>
            <person name="Lundgren D.H."/>
            <person name="Hwang S.-I."/>
            <person name="Rezaul K."/>
            <person name="Wu L."/>
            <person name="Eng J.K."/>
            <person name="Rodionov V."/>
            <person name="Han D.K."/>
        </authorList>
    </citation>
    <scope>IDENTIFICATION BY MASS SPECTROMETRY [LARGE SCALE ANALYSIS]</scope>
    <source>
        <tissue>Leukemic T-cell</tissue>
    </source>
</reference>
<reference key="16">
    <citation type="journal article" date="2009" name="Science">
        <title>Lysine acetylation targets protein complexes and co-regulates major cellular functions.</title>
        <authorList>
            <person name="Choudhary C."/>
            <person name="Kumar C."/>
            <person name="Gnad F."/>
            <person name="Nielsen M.L."/>
            <person name="Rehman M."/>
            <person name="Walther T.C."/>
            <person name="Olsen J.V."/>
            <person name="Mann M."/>
        </authorList>
    </citation>
    <scope>ACETYLATION [LARGE SCALE ANALYSIS] AT LYS-56</scope>
    <scope>IDENTIFICATION BY MASS SPECTROMETRY [LARGE SCALE ANALYSIS]</scope>
</reference>
<reference key="17">
    <citation type="journal article" date="2010" name="Sci. Signal.">
        <title>Quantitative phosphoproteomics reveals widespread full phosphorylation site occupancy during mitosis.</title>
        <authorList>
            <person name="Olsen J.V."/>
            <person name="Vermeulen M."/>
            <person name="Santamaria A."/>
            <person name="Kumar C."/>
            <person name="Miller M.L."/>
            <person name="Jensen L.J."/>
            <person name="Gnad F."/>
            <person name="Cox J."/>
            <person name="Jensen T.S."/>
            <person name="Nigg E.A."/>
            <person name="Brunak S."/>
            <person name="Mann M."/>
        </authorList>
    </citation>
    <scope>PHOSPHORYLATION [LARGE SCALE ANALYSIS] AT SER-8 AND SER-10</scope>
    <scope>IDENTIFICATION BY MASS SPECTROMETRY [LARGE SCALE ANALYSIS]</scope>
    <source>
        <tissue>Cervix carcinoma</tissue>
    </source>
</reference>
<reference key="18">
    <citation type="journal article" date="2011" name="Am. J. Hum. Genet.">
        <title>Mutations in DNAJC5, encoding cysteine-string protein alpha, cause autosomal-dominant adult-onset neuronal ceroid lipofuscinosis.</title>
        <authorList>
            <person name="Noskova L."/>
            <person name="Stranecky V."/>
            <person name="Hartmannova H."/>
            <person name="Pristoupilova A."/>
            <person name="Baresova V."/>
            <person name="Ivanek R."/>
            <person name="Hulkova H."/>
            <person name="Jahnova H."/>
            <person name="van der Zee J."/>
            <person name="Staropoli J.F."/>
            <person name="Sims K.B."/>
            <person name="Tyynela J."/>
            <person name="Van Broeckhoven C."/>
            <person name="Nijssen P.C."/>
            <person name="Mole S.E."/>
            <person name="Elleder M."/>
            <person name="Kmoch S."/>
        </authorList>
    </citation>
    <scope>SUBCELLULAR LOCATION</scope>
    <scope>VARIANTS CLN4B ARG-115 AND LEU-116 DEL</scope>
    <scope>CHARACTERIZATION OF VARIANTS CLN4B ARG-115 AND LEU-116 DEL</scope>
</reference>
<reference key="19">
    <citation type="journal article" date="2011" name="Sci. Signal.">
        <title>System-wide temporal characterization of the proteome and phosphoproteome of human embryonic stem cell differentiation.</title>
        <authorList>
            <person name="Rigbolt K.T."/>
            <person name="Prokhorova T.A."/>
            <person name="Akimov V."/>
            <person name="Henningsen J."/>
            <person name="Johansen P.T."/>
            <person name="Kratchmarova I."/>
            <person name="Kassem M."/>
            <person name="Mann M."/>
            <person name="Olsen J.V."/>
            <person name="Blagoev B."/>
        </authorList>
    </citation>
    <scope>PHOSPHORYLATION [LARGE SCALE ANALYSIS] AT SER-8 AND SER-10</scope>
    <scope>IDENTIFICATION BY MASS SPECTROMETRY [LARGE SCALE ANALYSIS]</scope>
</reference>
<reference key="20">
    <citation type="journal article" date="2013" name="J. Proteome Res.">
        <title>Toward a comprehensive characterization of a human cancer cell phosphoproteome.</title>
        <authorList>
            <person name="Zhou H."/>
            <person name="Di Palma S."/>
            <person name="Preisinger C."/>
            <person name="Peng M."/>
            <person name="Polat A.N."/>
            <person name="Heck A.J."/>
            <person name="Mohammed S."/>
        </authorList>
    </citation>
    <scope>PHOSPHORYLATION [LARGE SCALE ANALYSIS] AT SER-10; SER-12; SER-15 AND TYR-17</scope>
    <scope>IDENTIFICATION BY MASS SPECTROMETRY [LARGE SCALE ANALYSIS]</scope>
    <source>
        <tissue>Cervix carcinoma</tissue>
        <tissue>Erythroleukemia</tissue>
    </source>
</reference>
<reference key="21">
    <citation type="journal article" date="2014" name="J. Proteomics">
        <title>An enzyme assisted RP-RPLC approach for in-depth analysis of human liver phosphoproteome.</title>
        <authorList>
            <person name="Bian Y."/>
            <person name="Song C."/>
            <person name="Cheng K."/>
            <person name="Dong M."/>
            <person name="Wang F."/>
            <person name="Huang J."/>
            <person name="Sun D."/>
            <person name="Wang L."/>
            <person name="Ye M."/>
            <person name="Zou H."/>
        </authorList>
    </citation>
    <scope>IDENTIFICATION BY MASS SPECTROMETRY [LARGE SCALE ANALYSIS]</scope>
    <source>
        <tissue>Liver</tissue>
    </source>
</reference>
<reference key="22">
    <citation type="journal article" date="2015" name="Proteomics">
        <title>N-terminome analysis of the human mitochondrial proteome.</title>
        <authorList>
            <person name="Vaca Jacome A.S."/>
            <person name="Rabilloud T."/>
            <person name="Schaeffer-Reiss C."/>
            <person name="Rompais M."/>
            <person name="Ayoub D."/>
            <person name="Lane L."/>
            <person name="Bairoch A."/>
            <person name="Van Dorsselaer A."/>
            <person name="Carapito C."/>
        </authorList>
    </citation>
    <scope>IDENTIFICATION BY MASS SPECTROMETRY [LARGE SCALE ANALYSIS]</scope>
</reference>
<reference key="23">
    <citation type="journal article" date="2015" name="Semin. Cell Dev. Biol.">
        <title>Cysteine string protein (CSP) and its role in preventing neurodegeneration.</title>
        <authorList>
            <person name="Burgoyne R.D."/>
            <person name="Morgan A."/>
        </authorList>
    </citation>
    <scope>REVIEW</scope>
</reference>
<reference key="24">
    <citation type="journal article" date="2017" name="J. Biol. Chem.">
        <title>Peptide array based screening reveals a large number of proteins interacting with the ankyrin repeat domain of the zDHHC17 S-acyltransferase.</title>
        <authorList>
            <person name="Lemonidis K."/>
            <person name="MacLeod R."/>
            <person name="Baillie G.S."/>
            <person name="Chamberlain L.H."/>
        </authorList>
    </citation>
    <scope>INTERACTION WITH ZDHHC17</scope>
</reference>
<reference key="25">
    <citation type="journal article" date="2016" name="Structure">
        <title>Phosphorylation of Cysteine String Protein triggers a major conformational switch.</title>
        <authorList>
            <person name="Patel P."/>
            <person name="Prescott G.R."/>
            <person name="Burgoyne R.D."/>
            <person name="Lian L.Y."/>
            <person name="Morgan A."/>
        </authorList>
    </citation>
    <scope>STRUCTURE BY NMR OF 1-100 IN PHOSPHORYLATED AND UNPHOSPHORYLATED STATES</scope>
    <scope>SUBUNIT</scope>
    <scope>MUTAGENESIS OF 113-CYS--CYS-136</scope>
    <scope>PHOSPHORYLATION AT SER-10</scope>
</reference>
<reference key="26">
    <citation type="journal article" date="2011" name="PLoS ONE">
        <title>Exome-sequencing confirms DNAJC5 mutations as cause of adult neuronal ceroid-lipofuscinosis.</title>
        <authorList>
            <person name="Benitez B.A."/>
            <person name="Alvarado D."/>
            <person name="Cai Y."/>
            <person name="Mayo K."/>
            <person name="Chakraverty S."/>
            <person name="Norton J."/>
            <person name="Morris J.C."/>
            <person name="Sands M.S."/>
            <person name="Goate A."/>
            <person name="Cruchaga C."/>
        </authorList>
    </citation>
    <scope>VARIANT CLN4B ARG-115</scope>
</reference>
<reference key="27">
    <citation type="journal article" date="2012" name="J. Biol. Chem.">
        <title>Palmitoylation-induced aggregation of cysteine-string protein mutants that cause neuronal ceroid lipofuscinosis.</title>
        <authorList>
            <person name="Greaves J."/>
            <person name="Lemonidis K."/>
            <person name="Gorleku O.A."/>
            <person name="Cruchaga C."/>
            <person name="Grefen C."/>
            <person name="Chamberlain L.H."/>
        </authorList>
    </citation>
    <scope>CHARACTERIZATION OF VARIANTS CLN4B ARG-115 AND LEU-116 DEL</scope>
</reference>
<reference key="28">
    <citation type="journal article" date="2012" name="PLoS ONE">
        <title>Mutations in the gene DNAJC5 cause autosomal dominant Kufs disease in a proportion of cases: study of the Parry family and 8 other families.</title>
        <authorList>
            <person name="Velinov M."/>
            <person name="Dolzhanskaya N."/>
            <person name="Gonzalez M."/>
            <person name="Powell E."/>
            <person name="Konidari I."/>
            <person name="Hulme W."/>
            <person name="Staropoli J.F."/>
            <person name="Xin W."/>
            <person name="Wen G.Y."/>
            <person name="Barone R."/>
            <person name="Coppel S.H."/>
            <person name="Sims K."/>
            <person name="Brown W.T."/>
            <person name="Zuchner S."/>
        </authorList>
    </citation>
    <scope>VARIANTS CLN4B ARG-115 AND LEU-116 DEL</scope>
</reference>
<reference key="29">
    <citation type="journal article" date="2013" name="Clin. Genet.">
        <title>Recurrent mutations in DNAJC5 cause autosomal dominant Kufs disease.</title>
        <authorList>
            <person name="Cadieux-Dion M."/>
            <person name="Andermann E."/>
            <person name="Lachance-Touchette P."/>
            <person name="Ansorge O."/>
            <person name="Meloche C."/>
            <person name="Barnabe A."/>
            <person name="Kuzniecky R.I."/>
            <person name="Andermann F."/>
            <person name="Faught E."/>
            <person name="Leonberg S."/>
            <person name="Damiano J.A."/>
            <person name="Berkovic S.F."/>
            <person name="Rouleau G.A."/>
            <person name="Cossette P."/>
        </authorList>
    </citation>
    <scope>VARIANTS CLN4B ARG-115 AND LEU-116 DEL</scope>
</reference>
<dbReference type="EMBL" id="AL118506">
    <property type="status" value="NOT_ANNOTATED_CDS"/>
    <property type="molecule type" value="Genomic_DNA"/>
</dbReference>
<dbReference type="EMBL" id="CH471077">
    <property type="protein sequence ID" value="EAW75191.1"/>
    <property type="molecule type" value="Genomic_DNA"/>
</dbReference>
<dbReference type="EMBL" id="CH471077">
    <property type="protein sequence ID" value="EAW75192.1"/>
    <property type="molecule type" value="Genomic_DNA"/>
</dbReference>
<dbReference type="EMBL" id="BC053642">
    <property type="protein sequence ID" value="AAH53642.1"/>
    <property type="molecule type" value="mRNA"/>
</dbReference>
<dbReference type="EMBL" id="AK024508">
    <property type="protein sequence ID" value="BAB15798.1"/>
    <property type="molecule type" value="mRNA"/>
</dbReference>
<dbReference type="EMBL" id="AK128776">
    <property type="protein sequence ID" value="BAG54730.1"/>
    <property type="molecule type" value="mRNA"/>
</dbReference>
<dbReference type="EMBL" id="AK289585">
    <property type="protein sequence ID" value="BAF82274.1"/>
    <property type="molecule type" value="mRNA"/>
</dbReference>
<dbReference type="CCDS" id="CCDS13546.1">
    <molecule id="Q9H3Z4-1"/>
</dbReference>
<dbReference type="PIR" id="S70515">
    <property type="entry name" value="S70515"/>
</dbReference>
<dbReference type="RefSeq" id="NP_079495.1">
    <molecule id="Q9H3Z4-1"/>
    <property type="nucleotide sequence ID" value="NM_025219.3"/>
</dbReference>
<dbReference type="RefSeq" id="XP_011527350.1">
    <molecule id="Q9H3Z4-1"/>
    <property type="nucleotide sequence ID" value="XM_011529048.3"/>
</dbReference>
<dbReference type="RefSeq" id="XP_011527351.1">
    <property type="nucleotide sequence ID" value="XM_011529049.1"/>
</dbReference>
<dbReference type="RefSeq" id="XP_047296464.1">
    <molecule id="Q9H3Z4-1"/>
    <property type="nucleotide sequence ID" value="XM_047440508.1"/>
</dbReference>
<dbReference type="RefSeq" id="XP_047296465.1">
    <molecule id="Q9H3Z4-1"/>
    <property type="nucleotide sequence ID" value="XM_047440509.1"/>
</dbReference>
<dbReference type="RefSeq" id="XP_047296466.1">
    <molecule id="Q9H3Z4-1"/>
    <property type="nucleotide sequence ID" value="XM_047440510.1"/>
</dbReference>
<dbReference type="RefSeq" id="XP_047296467.1">
    <molecule id="Q9H3Z4-1"/>
    <property type="nucleotide sequence ID" value="XM_047440511.1"/>
</dbReference>
<dbReference type="RefSeq" id="XP_047296468.1">
    <molecule id="Q9H3Z4-1"/>
    <property type="nucleotide sequence ID" value="XM_047440512.1"/>
</dbReference>
<dbReference type="RefSeq" id="XP_054180014.1">
    <molecule id="Q9H3Z4-1"/>
    <property type="nucleotide sequence ID" value="XM_054324039.1"/>
</dbReference>
<dbReference type="RefSeq" id="XP_054180015.1">
    <molecule id="Q9H3Z4-1"/>
    <property type="nucleotide sequence ID" value="XM_054324040.1"/>
</dbReference>
<dbReference type="RefSeq" id="XP_054180016.1">
    <molecule id="Q9H3Z4-1"/>
    <property type="nucleotide sequence ID" value="XM_054324041.1"/>
</dbReference>
<dbReference type="RefSeq" id="XP_054180017.1">
    <molecule id="Q9H3Z4-1"/>
    <property type="nucleotide sequence ID" value="XM_054324042.1"/>
</dbReference>
<dbReference type="RefSeq" id="XP_054180018.1">
    <molecule id="Q9H3Z4-1"/>
    <property type="nucleotide sequence ID" value="XM_054324043.1"/>
</dbReference>
<dbReference type="RefSeq" id="XP_054180019.1">
    <molecule id="Q9H3Z4-1"/>
    <property type="nucleotide sequence ID" value="XM_054324044.1"/>
</dbReference>
<dbReference type="RefSeq" id="XP_054180020.1">
    <molecule id="Q9H3Z4-2"/>
    <property type="nucleotide sequence ID" value="XM_054324045.1"/>
</dbReference>
<dbReference type="PDB" id="2N04">
    <property type="method" value="NMR"/>
    <property type="chains" value="A=1-100"/>
</dbReference>
<dbReference type="PDB" id="2N05">
    <property type="method" value="NMR"/>
    <property type="chains" value="A=1-100"/>
</dbReference>
<dbReference type="PDBsum" id="2N04"/>
<dbReference type="PDBsum" id="2N05"/>
<dbReference type="SMR" id="Q9H3Z4"/>
<dbReference type="BioGRID" id="123242">
    <property type="interactions" value="376"/>
</dbReference>
<dbReference type="FunCoup" id="Q9H3Z4">
    <property type="interactions" value="2349"/>
</dbReference>
<dbReference type="IntAct" id="Q9H3Z4">
    <property type="interactions" value="84"/>
</dbReference>
<dbReference type="STRING" id="9606.ENSP00000354111"/>
<dbReference type="iPTMnet" id="Q9H3Z4"/>
<dbReference type="PhosphoSitePlus" id="Q9H3Z4"/>
<dbReference type="SwissPalm" id="Q9H3Z4"/>
<dbReference type="BioMuta" id="DNAJC5"/>
<dbReference type="DMDM" id="15213953"/>
<dbReference type="jPOST" id="Q9H3Z4"/>
<dbReference type="MassIVE" id="Q9H3Z4"/>
<dbReference type="PaxDb" id="9606-ENSP00000354111"/>
<dbReference type="PeptideAtlas" id="Q9H3Z4"/>
<dbReference type="ProteomicsDB" id="80772">
    <molecule id="Q9H3Z4-1"/>
</dbReference>
<dbReference type="ProteomicsDB" id="80773">
    <molecule id="Q9H3Z4-2"/>
</dbReference>
<dbReference type="Pumba" id="Q9H3Z4"/>
<dbReference type="Antibodypedia" id="2284">
    <property type="antibodies" value="253 antibodies from 32 providers"/>
</dbReference>
<dbReference type="DNASU" id="80331"/>
<dbReference type="Ensembl" id="ENST00000360864.9">
    <molecule id="Q9H3Z4-1"/>
    <property type="protein sequence ID" value="ENSP00000354111.4"/>
    <property type="gene ID" value="ENSG00000101152.12"/>
</dbReference>
<dbReference type="Ensembl" id="ENST00000470551.1">
    <molecule id="Q9H3Z4-2"/>
    <property type="protein sequence ID" value="ENSP00000434744.1"/>
    <property type="gene ID" value="ENSG00000101152.12"/>
</dbReference>
<dbReference type="Ensembl" id="ENST00000703637.1">
    <molecule id="Q9H3Z4-2"/>
    <property type="protein sequence ID" value="ENSP00000515413.1"/>
    <property type="gene ID" value="ENSG00000101152.12"/>
</dbReference>
<dbReference type="GeneID" id="80331"/>
<dbReference type="KEGG" id="hsa:80331"/>
<dbReference type="MANE-Select" id="ENST00000360864.9">
    <property type="protein sequence ID" value="ENSP00000354111.4"/>
    <property type="RefSeq nucleotide sequence ID" value="NM_025219.3"/>
    <property type="RefSeq protein sequence ID" value="NP_079495.1"/>
</dbReference>
<dbReference type="UCSC" id="uc002yhf.4">
    <molecule id="Q9H3Z4-1"/>
    <property type="organism name" value="human"/>
</dbReference>
<dbReference type="AGR" id="HGNC:16235"/>
<dbReference type="CTD" id="80331"/>
<dbReference type="DisGeNET" id="80331"/>
<dbReference type="GeneCards" id="DNAJC5"/>
<dbReference type="HGNC" id="HGNC:16235">
    <property type="gene designation" value="DNAJC5"/>
</dbReference>
<dbReference type="HPA" id="ENSG00000101152">
    <property type="expression patterns" value="Tissue enhanced (brain)"/>
</dbReference>
<dbReference type="MalaCards" id="DNAJC5"/>
<dbReference type="MIM" id="162350">
    <property type="type" value="phenotype"/>
</dbReference>
<dbReference type="MIM" id="611203">
    <property type="type" value="gene"/>
</dbReference>
<dbReference type="neXtProt" id="NX_Q9H3Z4"/>
<dbReference type="OpenTargets" id="ENSG00000101152"/>
<dbReference type="Orphanet" id="228343">
    <property type="disease" value="CLN4 disease"/>
</dbReference>
<dbReference type="PharmGKB" id="PA27422"/>
<dbReference type="VEuPathDB" id="HostDB:ENSG00000101152"/>
<dbReference type="eggNOG" id="KOG0716">
    <property type="taxonomic scope" value="Eukaryota"/>
</dbReference>
<dbReference type="GeneTree" id="ENSGT00940000155597"/>
<dbReference type="HOGENOM" id="CLU_017633_14_1_1"/>
<dbReference type="InParanoid" id="Q9H3Z4"/>
<dbReference type="OMA" id="CCLCCNF"/>
<dbReference type="OrthoDB" id="445556at2759"/>
<dbReference type="PAN-GO" id="Q9H3Z4">
    <property type="GO annotations" value="5 GO annotations based on evolutionary models"/>
</dbReference>
<dbReference type="PhylomeDB" id="Q9H3Z4"/>
<dbReference type="TreeFam" id="TF105164"/>
<dbReference type="PathwayCommons" id="Q9H3Z4"/>
<dbReference type="Reactome" id="R-HSA-6798695">
    <property type="pathway name" value="Neutrophil degranulation"/>
</dbReference>
<dbReference type="Reactome" id="R-HSA-888590">
    <property type="pathway name" value="GABA synthesis, release, reuptake and degradation"/>
</dbReference>
<dbReference type="Reactome" id="R-HSA-9662360">
    <property type="pathway name" value="Sensory processing of sound by inner hair cells of the cochlea"/>
</dbReference>
<dbReference type="SignaLink" id="Q9H3Z4"/>
<dbReference type="SIGNOR" id="Q9H3Z4"/>
<dbReference type="BioGRID-ORCS" id="80331">
    <property type="hits" value="22 hits in 1151 CRISPR screens"/>
</dbReference>
<dbReference type="ChiTaRS" id="DNAJC5">
    <property type="organism name" value="human"/>
</dbReference>
<dbReference type="GeneWiki" id="DNAJC5"/>
<dbReference type="GenomeRNAi" id="80331"/>
<dbReference type="Pharos" id="Q9H3Z4">
    <property type="development level" value="Tbio"/>
</dbReference>
<dbReference type="PRO" id="PR:Q9H3Z4"/>
<dbReference type="Proteomes" id="UP000005640">
    <property type="component" value="Chromosome 20"/>
</dbReference>
<dbReference type="RNAct" id="Q9H3Z4">
    <property type="molecule type" value="protein"/>
</dbReference>
<dbReference type="Bgee" id="ENSG00000101152">
    <property type="expression patterns" value="Expressed in cardiac muscle of right atrium and 177 other cell types or tissues"/>
</dbReference>
<dbReference type="GO" id="GO:0035577">
    <property type="term" value="C:azurophil granule membrane"/>
    <property type="evidence" value="ECO:0000304"/>
    <property type="project" value="Reactome"/>
</dbReference>
<dbReference type="GO" id="GO:0042584">
    <property type="term" value="C:chromaffin granule membrane"/>
    <property type="evidence" value="ECO:0007669"/>
    <property type="project" value="UniProtKB-SubCell"/>
</dbReference>
<dbReference type="GO" id="GO:0061202">
    <property type="term" value="C:clathrin-sculpted gamma-aminobutyric acid transport vesicle membrane"/>
    <property type="evidence" value="ECO:0000304"/>
    <property type="project" value="Reactome"/>
</dbReference>
<dbReference type="GO" id="GO:0005829">
    <property type="term" value="C:cytosol"/>
    <property type="evidence" value="ECO:0000250"/>
    <property type="project" value="UniProtKB"/>
</dbReference>
<dbReference type="GO" id="GO:0043231">
    <property type="term" value="C:intracellular membrane-bounded organelle"/>
    <property type="evidence" value="ECO:0000318"/>
    <property type="project" value="GO_Central"/>
</dbReference>
<dbReference type="GO" id="GO:0005765">
    <property type="term" value="C:lysosomal membrane"/>
    <property type="evidence" value="ECO:0007005"/>
    <property type="project" value="UniProtKB"/>
</dbReference>
<dbReference type="GO" id="GO:0042470">
    <property type="term" value="C:melanosome"/>
    <property type="evidence" value="ECO:0007669"/>
    <property type="project" value="UniProtKB-SubCell"/>
</dbReference>
<dbReference type="GO" id="GO:0016020">
    <property type="term" value="C:membrane"/>
    <property type="evidence" value="ECO:0007005"/>
    <property type="project" value="UniProtKB"/>
</dbReference>
<dbReference type="GO" id="GO:0005739">
    <property type="term" value="C:mitochondrion"/>
    <property type="evidence" value="ECO:0007005"/>
    <property type="project" value="UniProtKB"/>
</dbReference>
<dbReference type="GO" id="GO:0031594">
    <property type="term" value="C:neuromuscular junction"/>
    <property type="evidence" value="ECO:0007669"/>
    <property type="project" value="Ensembl"/>
</dbReference>
<dbReference type="GO" id="GO:0005886">
    <property type="term" value="C:plasma membrane"/>
    <property type="evidence" value="ECO:0000314"/>
    <property type="project" value="UniProtKB"/>
</dbReference>
<dbReference type="GO" id="GO:0098793">
    <property type="term" value="C:presynapse"/>
    <property type="evidence" value="ECO:0000318"/>
    <property type="project" value="GO_Central"/>
</dbReference>
<dbReference type="GO" id="GO:0035579">
    <property type="term" value="C:specific granule membrane"/>
    <property type="evidence" value="ECO:0000304"/>
    <property type="project" value="Reactome"/>
</dbReference>
<dbReference type="GO" id="GO:0030672">
    <property type="term" value="C:synaptic vesicle membrane"/>
    <property type="evidence" value="ECO:0007669"/>
    <property type="project" value="Ensembl"/>
</dbReference>
<dbReference type="GO" id="GO:0043008">
    <property type="term" value="F:ATP-dependent protein binding"/>
    <property type="evidence" value="ECO:0007669"/>
    <property type="project" value="Ensembl"/>
</dbReference>
<dbReference type="GO" id="GO:0061077">
    <property type="term" value="P:chaperone-mediated protein folding"/>
    <property type="evidence" value="ECO:0000318"/>
    <property type="project" value="GO_Central"/>
</dbReference>
<dbReference type="GO" id="GO:0006887">
    <property type="term" value="P:exocytosis"/>
    <property type="evidence" value="ECO:0000303"/>
    <property type="project" value="ParkinsonsUK-UCL"/>
</dbReference>
<dbReference type="GO" id="GO:0043524">
    <property type="term" value="P:negative regulation of neuron apoptotic process"/>
    <property type="evidence" value="ECO:0007669"/>
    <property type="project" value="Ensembl"/>
</dbReference>
<dbReference type="GO" id="GO:0051402">
    <property type="term" value="P:neuron apoptotic process"/>
    <property type="evidence" value="ECO:0007669"/>
    <property type="project" value="Ensembl"/>
</dbReference>
<dbReference type="GO" id="GO:0045055">
    <property type="term" value="P:regulated exocytosis"/>
    <property type="evidence" value="ECO:0000304"/>
    <property type="project" value="ParkinsonsUK-UCL"/>
</dbReference>
<dbReference type="GO" id="GO:0098693">
    <property type="term" value="P:regulation of synaptic vesicle cycle"/>
    <property type="evidence" value="ECO:0000318"/>
    <property type="project" value="GO_Central"/>
</dbReference>
<dbReference type="GO" id="GO:0016079">
    <property type="term" value="P:synaptic vesicle exocytosis"/>
    <property type="evidence" value="ECO:0000304"/>
    <property type="project" value="ParkinsonsUK-UCL"/>
</dbReference>
<dbReference type="CDD" id="cd06257">
    <property type="entry name" value="DnaJ"/>
    <property type="match status" value="1"/>
</dbReference>
<dbReference type="FunFam" id="1.10.287.110:FF:000017">
    <property type="entry name" value="dnaJ homolog subfamily C member 5"/>
    <property type="match status" value="1"/>
</dbReference>
<dbReference type="Gene3D" id="1.10.287.110">
    <property type="entry name" value="DnaJ domain"/>
    <property type="match status" value="1"/>
</dbReference>
<dbReference type="InterPro" id="IPR051434">
    <property type="entry name" value="DnaJ_C_subfamily_member5"/>
</dbReference>
<dbReference type="InterPro" id="IPR001623">
    <property type="entry name" value="DnaJ_domain"/>
</dbReference>
<dbReference type="InterPro" id="IPR018253">
    <property type="entry name" value="DnaJ_domain_CS"/>
</dbReference>
<dbReference type="InterPro" id="IPR036869">
    <property type="entry name" value="J_dom_sf"/>
</dbReference>
<dbReference type="PANTHER" id="PTHR44027:SF1">
    <property type="entry name" value="DNAJ HOMOLOG SUBFAMILY C MEMBER 5"/>
    <property type="match status" value="1"/>
</dbReference>
<dbReference type="PANTHER" id="PTHR44027">
    <property type="entry name" value="DNAJ HOMOLOG SUBFAMILY C MEMBER 5 HOMOLOG"/>
    <property type="match status" value="1"/>
</dbReference>
<dbReference type="Pfam" id="PF00226">
    <property type="entry name" value="DnaJ"/>
    <property type="match status" value="1"/>
</dbReference>
<dbReference type="PRINTS" id="PR00625">
    <property type="entry name" value="JDOMAIN"/>
</dbReference>
<dbReference type="SMART" id="SM00271">
    <property type="entry name" value="DnaJ"/>
    <property type="match status" value="1"/>
</dbReference>
<dbReference type="SUPFAM" id="SSF46565">
    <property type="entry name" value="Chaperone J-domain"/>
    <property type="match status" value="1"/>
</dbReference>
<dbReference type="PROSITE" id="PS00636">
    <property type="entry name" value="DNAJ_1"/>
    <property type="match status" value="1"/>
</dbReference>
<dbReference type="PROSITE" id="PS50076">
    <property type="entry name" value="DNAJ_2"/>
    <property type="match status" value="1"/>
</dbReference>
<name>DNJC5_HUMAN</name>
<feature type="chain" id="PRO_0000071052" description="DnaJ homolog subfamily C member 5">
    <location>
        <begin position="1"/>
        <end position="198"/>
    </location>
</feature>
<feature type="domain" description="J" evidence="3">
    <location>
        <begin position="13"/>
        <end position="82"/>
    </location>
</feature>
<feature type="modified residue" description="Phosphoserine" evidence="22 23">
    <location>
        <position position="8"/>
    </location>
</feature>
<feature type="modified residue" description="Phosphoserine" evidence="5 12 20 22 23 24">
    <location>
        <position position="10"/>
    </location>
</feature>
<feature type="modified residue" description="Phosphoserine" evidence="24">
    <location>
        <position position="12"/>
    </location>
</feature>
<feature type="modified residue" description="Phosphoserine" evidence="20 24">
    <location>
        <position position="15"/>
    </location>
</feature>
<feature type="modified residue" description="Phosphotyrosine" evidence="24">
    <location>
        <position position="17"/>
    </location>
</feature>
<feature type="modified residue" description="N6-acetyllysine" evidence="21">
    <location>
        <position position="56"/>
    </location>
</feature>
<feature type="modified residue" description="Phosphoserine" evidence="1">
    <location>
        <position position="151"/>
    </location>
</feature>
<feature type="splice variant" id="VSP_001292" description="In isoform 2." evidence="15">
    <original>EATDTPIVIQPASATETTQLTADSHPSYHTDGFN</original>
    <variation>GGH</variation>
    <location>
        <begin position="165"/>
        <end position="198"/>
    </location>
</feature>
<feature type="sequence variant" id="VAR_066555" description="In CLN4B; results in near absence of palmitoylated monomeric forms of the protein and formation of high molecular mass aggregates with diffuse intracellular localization; dbSNP:rs387907043." evidence="7 8 9 10 11">
    <original>L</original>
    <variation>R</variation>
    <location>
        <position position="115"/>
    </location>
</feature>
<feature type="sequence variant" id="VAR_066556" description="In CLN4B; results in near absence of palmitoylated monomeric forms of the protein and formation of high molecular mass aggregates with diffuse intracellular localization; dbSNP:rs587776892." evidence="7 9 10 11">
    <location>
        <position position="116"/>
    </location>
</feature>
<feature type="mutagenesis site" description="Increased syntaxin binding." evidence="4">
    <original>S</original>
    <variation>A</variation>
    <variation>E</variation>
    <location>
        <position position="10"/>
    </location>
</feature>
<feature type="mutagenesis site" description="No effect on oligomerization." evidence="12">
    <original>CGLLTCCYCCCCLCCCFNCCCGKC</original>
    <variation>SGLLTSSYSSSSLSSSFNSSSGKS</variation>
    <location>
        <begin position="113"/>
        <end position="136"/>
    </location>
</feature>
<feature type="helix" evidence="26">
    <location>
        <begin position="7"/>
        <end position="10"/>
    </location>
</feature>
<feature type="helix" evidence="25">
    <location>
        <begin position="13"/>
        <end position="15"/>
    </location>
</feature>
<feature type="helix" evidence="25">
    <location>
        <begin position="16"/>
        <end position="20"/>
    </location>
</feature>
<feature type="strand" evidence="25">
    <location>
        <begin position="23"/>
        <end position="26"/>
    </location>
</feature>
<feature type="helix" evidence="25">
    <location>
        <begin position="30"/>
        <end position="42"/>
    </location>
</feature>
<feature type="turn" evidence="25">
    <location>
        <begin position="44"/>
        <end position="46"/>
    </location>
</feature>
<feature type="helix" evidence="25">
    <location>
        <begin position="51"/>
        <end position="66"/>
    </location>
</feature>
<feature type="helix" evidence="25">
    <location>
        <begin position="70"/>
        <end position="76"/>
    </location>
</feature>
<feature type="helix" evidence="25">
    <location>
        <begin position="81"/>
        <end position="87"/>
    </location>
</feature>
<feature type="turn" evidence="25">
    <location>
        <begin position="88"/>
        <end position="90"/>
    </location>
</feature>
<feature type="turn" evidence="25">
    <location>
        <begin position="92"/>
        <end position="98"/>
    </location>
</feature>